<evidence type="ECO:0000255" key="1"/>
<evidence type="ECO:0000255" key="2">
    <source>
        <dbReference type="PROSITE-ProRule" id="PRU00204"/>
    </source>
</evidence>
<evidence type="ECO:0000256" key="3">
    <source>
        <dbReference type="SAM" id="MobiDB-lite"/>
    </source>
</evidence>
<evidence type="ECO:0000269" key="4">
    <source>
    </source>
</evidence>
<evidence type="ECO:0000269" key="5">
    <source>
    </source>
</evidence>
<evidence type="ECO:0000269" key="6">
    <source>
    </source>
</evidence>
<evidence type="ECO:0000269" key="7">
    <source>
    </source>
</evidence>
<evidence type="ECO:0000269" key="8">
    <source>
    </source>
</evidence>
<evidence type="ECO:0000269" key="9">
    <source>
    </source>
</evidence>
<evidence type="ECO:0000269" key="10">
    <source>
    </source>
</evidence>
<evidence type="ECO:0000269" key="11">
    <source>
    </source>
</evidence>
<evidence type="ECO:0000269" key="12">
    <source>
    </source>
</evidence>
<evidence type="ECO:0000269" key="13">
    <source>
    </source>
</evidence>
<evidence type="ECO:0000269" key="14">
    <source ref="3"/>
</evidence>
<evidence type="ECO:0000305" key="15"/>
<evidence type="ECO:0000305" key="16">
    <source>
    </source>
</evidence>
<evidence type="ECO:0007829" key="17">
    <source>
        <dbReference type="PDB" id="1G0Y"/>
    </source>
</evidence>
<evidence type="ECO:0007829" key="18">
    <source>
        <dbReference type="PDB" id="1IRA"/>
    </source>
</evidence>
<evidence type="ECO:0007829" key="19">
    <source>
        <dbReference type="PDB" id="1ITB"/>
    </source>
</evidence>
<evidence type="ECO:0007829" key="20">
    <source>
        <dbReference type="PDB" id="4GAF"/>
    </source>
</evidence>
<dbReference type="EC" id="3.2.2.6" evidence="2"/>
<dbReference type="EMBL" id="X16896">
    <property type="protein sequence ID" value="CAA34773.1"/>
    <property type="molecule type" value="mRNA"/>
</dbReference>
<dbReference type="EMBL" id="M27492">
    <property type="protein sequence ID" value="AAA59137.1"/>
    <property type="molecule type" value="mRNA"/>
</dbReference>
<dbReference type="EMBL" id="AF531102">
    <property type="protein sequence ID" value="AAM88423.1"/>
    <property type="molecule type" value="Genomic_DNA"/>
</dbReference>
<dbReference type="EMBL" id="AC007271">
    <property type="protein sequence ID" value="AAX81988.1"/>
    <property type="molecule type" value="Genomic_DNA"/>
</dbReference>
<dbReference type="EMBL" id="CH471127">
    <property type="protein sequence ID" value="EAX01799.1"/>
    <property type="molecule type" value="Genomic_DNA"/>
</dbReference>
<dbReference type="EMBL" id="BC067506">
    <property type="protein sequence ID" value="AAH67506.1"/>
    <property type="molecule type" value="mRNA"/>
</dbReference>
<dbReference type="EMBL" id="BC075062">
    <property type="protein sequence ID" value="AAH75062.1"/>
    <property type="molecule type" value="mRNA"/>
</dbReference>
<dbReference type="EMBL" id="BC075063">
    <property type="protein sequence ID" value="AAH75063.1"/>
    <property type="molecule type" value="mRNA"/>
</dbReference>
<dbReference type="CCDS" id="CCDS2055.1"/>
<dbReference type="PIR" id="A36187">
    <property type="entry name" value="A36187"/>
</dbReference>
<dbReference type="RefSeq" id="NP_000868.1">
    <property type="nucleotide sequence ID" value="NM_000877.4"/>
</dbReference>
<dbReference type="RefSeq" id="NP_001275635.1">
    <property type="nucleotide sequence ID" value="NM_001288706.1"/>
</dbReference>
<dbReference type="RefSeq" id="NP_001307907.1">
    <property type="nucleotide sequence ID" value="NM_001320978.2"/>
</dbReference>
<dbReference type="RefSeq" id="NP_001307909.1">
    <property type="nucleotide sequence ID" value="NM_001320980.2"/>
</dbReference>
<dbReference type="RefSeq" id="NP_001307910.1">
    <property type="nucleotide sequence ID" value="NM_001320981.2"/>
</dbReference>
<dbReference type="RefSeq" id="NP_001307911.1">
    <property type="nucleotide sequence ID" value="NM_001320982.2"/>
</dbReference>
<dbReference type="RefSeq" id="NP_001307912.1">
    <property type="nucleotide sequence ID" value="NM_001320983.1"/>
</dbReference>
<dbReference type="RefSeq" id="NP_001307913.1">
    <property type="nucleotide sequence ID" value="NM_001320984.1"/>
</dbReference>
<dbReference type="RefSeq" id="NP_001307914.1">
    <property type="nucleotide sequence ID" value="NM_001320985.1"/>
</dbReference>
<dbReference type="RefSeq" id="XP_005263987.1">
    <property type="nucleotide sequence ID" value="XM_005263930.4"/>
</dbReference>
<dbReference type="RefSeq" id="XP_005263991.1">
    <property type="nucleotide sequence ID" value="XM_005263934.5"/>
</dbReference>
<dbReference type="RefSeq" id="XP_011509417.1">
    <property type="nucleotide sequence ID" value="XM_011511115.3"/>
</dbReference>
<dbReference type="RefSeq" id="XP_011509418.1">
    <property type="nucleotide sequence ID" value="XM_011511116.2"/>
</dbReference>
<dbReference type="RefSeq" id="XP_011509419.1">
    <property type="nucleotide sequence ID" value="XM_011511117.1"/>
</dbReference>
<dbReference type="RefSeq" id="XP_011509420.1">
    <property type="nucleotide sequence ID" value="XM_011511118.3"/>
</dbReference>
<dbReference type="RefSeq" id="XP_016859478.1">
    <property type="nucleotide sequence ID" value="XM_017003989.1"/>
</dbReference>
<dbReference type="RefSeq" id="XP_047300132.1">
    <property type="nucleotide sequence ID" value="XM_047444176.1"/>
</dbReference>
<dbReference type="RefSeq" id="XP_047300133.1">
    <property type="nucleotide sequence ID" value="XM_047444177.1"/>
</dbReference>
<dbReference type="RefSeq" id="XP_047300134.1">
    <property type="nucleotide sequence ID" value="XM_047444178.1"/>
</dbReference>
<dbReference type="RefSeq" id="XP_047300135.1">
    <property type="nucleotide sequence ID" value="XM_047444179.1"/>
</dbReference>
<dbReference type="RefSeq" id="XP_054197786.1">
    <property type="nucleotide sequence ID" value="XM_054341811.1"/>
</dbReference>
<dbReference type="RefSeq" id="XP_054197787.1">
    <property type="nucleotide sequence ID" value="XM_054341812.1"/>
</dbReference>
<dbReference type="RefSeq" id="XP_054197788.1">
    <property type="nucleotide sequence ID" value="XM_054341813.1"/>
</dbReference>
<dbReference type="RefSeq" id="XP_054197789.1">
    <property type="nucleotide sequence ID" value="XM_054341814.1"/>
</dbReference>
<dbReference type="RefSeq" id="XP_054197790.1">
    <property type="nucleotide sequence ID" value="XM_054341815.1"/>
</dbReference>
<dbReference type="RefSeq" id="XP_054197791.1">
    <property type="nucleotide sequence ID" value="XM_054341816.1"/>
</dbReference>
<dbReference type="PDB" id="1G0Y">
    <property type="method" value="X-ray"/>
    <property type="resolution" value="3.00 A"/>
    <property type="chains" value="R=21-332"/>
</dbReference>
<dbReference type="PDB" id="1IRA">
    <property type="method" value="X-ray"/>
    <property type="resolution" value="2.70 A"/>
    <property type="chains" value="Y=18-336"/>
</dbReference>
<dbReference type="PDB" id="1ITB">
    <property type="method" value="X-ray"/>
    <property type="resolution" value="2.50 A"/>
    <property type="chains" value="B=18-332"/>
</dbReference>
<dbReference type="PDB" id="4DEP">
    <property type="method" value="X-ray"/>
    <property type="resolution" value="3.10 A"/>
    <property type="chains" value="B/E=18-336"/>
</dbReference>
<dbReference type="PDB" id="4GAF">
    <property type="method" value="X-ray"/>
    <property type="resolution" value="2.15 A"/>
    <property type="chains" value="B=18-336"/>
</dbReference>
<dbReference type="PDBsum" id="1G0Y"/>
<dbReference type="PDBsum" id="1IRA"/>
<dbReference type="PDBsum" id="1ITB"/>
<dbReference type="PDBsum" id="4DEP"/>
<dbReference type="PDBsum" id="4GAF"/>
<dbReference type="SASBDB" id="P14778"/>
<dbReference type="SMR" id="P14778"/>
<dbReference type="BioGRID" id="109770">
    <property type="interactions" value="31"/>
</dbReference>
<dbReference type="ComplexPortal" id="CPX-527">
    <property type="entry name" value="Interleukin-1 beta ligand-membrane bound receptor type 1 complex"/>
</dbReference>
<dbReference type="ComplexPortal" id="CPX-8830">
    <property type="entry name" value="Interleukin-1 alpha-soluble receptor type 1 complex"/>
</dbReference>
<dbReference type="ComplexPortal" id="CPX-9126">
    <property type="entry name" value="Interleukin-1 antagonist complex"/>
</dbReference>
<dbReference type="ComplexPortal" id="CPX-9128">
    <property type="entry name" value="Interleukin-1 beta ligand-soluble receptor type 1 complex"/>
</dbReference>
<dbReference type="ComplexPortal" id="CPX-9166">
    <property type="entry name" value="Precursor interleukin-1 alpha-soluble receptor type 1 complex"/>
</dbReference>
<dbReference type="ComplexPortal" id="CPX-9169">
    <property type="entry name" value="Precursor interleukin-1 alpha-membrane-bound receptor type 1 complex"/>
</dbReference>
<dbReference type="ComplexPortal" id="CPX-9173">
    <property type="entry name" value="Interleukin-1 alpha-membrane-bound receptor type 1 complex"/>
</dbReference>
<dbReference type="CORUM" id="P14778"/>
<dbReference type="DIP" id="DIP-93N"/>
<dbReference type="FunCoup" id="P14778">
    <property type="interactions" value="1342"/>
</dbReference>
<dbReference type="IntAct" id="P14778">
    <property type="interactions" value="16"/>
</dbReference>
<dbReference type="STRING" id="9606.ENSP00000386380"/>
<dbReference type="BindingDB" id="P14778"/>
<dbReference type="ChEMBL" id="CHEMBL1959"/>
<dbReference type="DrugBank" id="DB00026">
    <property type="generic name" value="Anakinra"/>
</dbReference>
<dbReference type="DrugBank" id="DB10770">
    <property type="generic name" value="Foreskin fibroblast (neonatal)"/>
</dbReference>
<dbReference type="DrugBank" id="DB05303">
    <property type="generic name" value="OMS-103HP"/>
</dbReference>
<dbReference type="DrugBank" id="DB05207">
    <property type="generic name" value="SD118"/>
</dbReference>
<dbReference type="DrugCentral" id="P14778"/>
<dbReference type="GuidetoPHARMACOLOGY" id="1734"/>
<dbReference type="TCDB" id="8.A.23.1.11">
    <property type="family name" value="the basigin (basigin) family"/>
</dbReference>
<dbReference type="GlyCosmos" id="P14778">
    <property type="glycosylation" value="6 sites, No reported glycans"/>
</dbReference>
<dbReference type="GlyGen" id="P14778">
    <property type="glycosylation" value="6 sites, 1 N-linked glycan (1 site)"/>
</dbReference>
<dbReference type="iPTMnet" id="P14778"/>
<dbReference type="PhosphoSitePlus" id="P14778"/>
<dbReference type="BioMuta" id="IL1R1"/>
<dbReference type="DMDM" id="124308"/>
<dbReference type="jPOST" id="P14778"/>
<dbReference type="MassIVE" id="P14778"/>
<dbReference type="PaxDb" id="9606-ENSP00000386380"/>
<dbReference type="PeptideAtlas" id="P14778"/>
<dbReference type="ProteomicsDB" id="53081"/>
<dbReference type="ABCD" id="P14778">
    <property type="antibodies" value="148 sequenced antibodies"/>
</dbReference>
<dbReference type="Antibodypedia" id="3576">
    <property type="antibodies" value="1007 antibodies from 43 providers"/>
</dbReference>
<dbReference type="DNASU" id="3554"/>
<dbReference type="Ensembl" id="ENST00000410023.6">
    <property type="protein sequence ID" value="ENSP00000386380.1"/>
    <property type="gene ID" value="ENSG00000115594.12"/>
</dbReference>
<dbReference type="GeneID" id="3554"/>
<dbReference type="KEGG" id="hsa:3554"/>
<dbReference type="MANE-Select" id="ENST00000410023.6">
    <property type="protein sequence ID" value="ENSP00000386380.1"/>
    <property type="RefSeq nucleotide sequence ID" value="NM_000877.4"/>
    <property type="RefSeq protein sequence ID" value="NP_000868.1"/>
</dbReference>
<dbReference type="UCSC" id="uc002tbq.5">
    <property type="organism name" value="human"/>
</dbReference>
<dbReference type="AGR" id="HGNC:5993"/>
<dbReference type="CTD" id="3554"/>
<dbReference type="DisGeNET" id="3554"/>
<dbReference type="GeneCards" id="IL1R1"/>
<dbReference type="HGNC" id="HGNC:5993">
    <property type="gene designation" value="IL1R1"/>
</dbReference>
<dbReference type="HPA" id="ENSG00000115594">
    <property type="expression patterns" value="Low tissue specificity"/>
</dbReference>
<dbReference type="MalaCards" id="IL1R1"/>
<dbReference type="MIM" id="147810">
    <property type="type" value="gene"/>
</dbReference>
<dbReference type="MIM" id="259680">
    <property type="type" value="phenotype"/>
</dbReference>
<dbReference type="neXtProt" id="NX_P14778"/>
<dbReference type="OpenTargets" id="ENSG00000115594"/>
<dbReference type="PharmGKB" id="PA29809"/>
<dbReference type="VEuPathDB" id="HostDB:ENSG00000115594"/>
<dbReference type="eggNOG" id="ENOG502QWEU">
    <property type="taxonomic scope" value="Eukaryota"/>
</dbReference>
<dbReference type="GeneTree" id="ENSGT01090000259985"/>
<dbReference type="HOGENOM" id="CLU_025552_3_1_1"/>
<dbReference type="InParanoid" id="P14778"/>
<dbReference type="OMA" id="HMPAQRQ"/>
<dbReference type="OrthoDB" id="6132459at2759"/>
<dbReference type="PAN-GO" id="P14778">
    <property type="GO annotations" value="4 GO annotations based on evolutionary models"/>
</dbReference>
<dbReference type="PhylomeDB" id="P14778"/>
<dbReference type="TreeFam" id="TF325519"/>
<dbReference type="PathwayCommons" id="P14778"/>
<dbReference type="Reactome" id="R-HSA-6783783">
    <property type="pathway name" value="Interleukin-10 signaling"/>
</dbReference>
<dbReference type="Reactome" id="R-HSA-9020702">
    <property type="pathway name" value="Interleukin-1 signaling"/>
</dbReference>
<dbReference type="Reactome" id="R-HSA-9679191">
    <property type="pathway name" value="Potential therapeutics for SARS"/>
</dbReference>
<dbReference type="SignaLink" id="P14778"/>
<dbReference type="SIGNOR" id="P14778"/>
<dbReference type="BioGRID-ORCS" id="3554">
    <property type="hits" value="20 hits in 1175 CRISPR screens"/>
</dbReference>
<dbReference type="ChiTaRS" id="IL1R1">
    <property type="organism name" value="human"/>
</dbReference>
<dbReference type="EvolutionaryTrace" id="P14778"/>
<dbReference type="GeneWiki" id="Interleukin_1_receptor,_type_I"/>
<dbReference type="GenomeRNAi" id="3554"/>
<dbReference type="Pharos" id="P14778">
    <property type="development level" value="Tclin"/>
</dbReference>
<dbReference type="PRO" id="PR:P14778"/>
<dbReference type="Proteomes" id="UP000005640">
    <property type="component" value="Chromosome 2"/>
</dbReference>
<dbReference type="RNAct" id="P14778">
    <property type="molecule type" value="protein"/>
</dbReference>
<dbReference type="Bgee" id="ENSG00000115594">
    <property type="expression patterns" value="Expressed in palpebral conjunctiva and 203 other cell types or tissues"/>
</dbReference>
<dbReference type="ExpressionAtlas" id="P14778">
    <property type="expression patterns" value="baseline and differential"/>
</dbReference>
<dbReference type="GO" id="GO:0009986">
    <property type="term" value="C:cell surface"/>
    <property type="evidence" value="ECO:0000318"/>
    <property type="project" value="GO_Central"/>
</dbReference>
<dbReference type="GO" id="GO:0009897">
    <property type="term" value="C:external side of plasma membrane"/>
    <property type="evidence" value="ECO:0007669"/>
    <property type="project" value="Ensembl"/>
</dbReference>
<dbReference type="GO" id="GO:0005576">
    <property type="term" value="C:extracellular region"/>
    <property type="evidence" value="ECO:0007669"/>
    <property type="project" value="UniProtKB-SubCell"/>
</dbReference>
<dbReference type="GO" id="GO:0016020">
    <property type="term" value="C:membrane"/>
    <property type="evidence" value="ECO:0000314"/>
    <property type="project" value="BHF-UCL"/>
</dbReference>
<dbReference type="GO" id="GO:0005886">
    <property type="term" value="C:plasma membrane"/>
    <property type="evidence" value="ECO:0000314"/>
    <property type="project" value="UniProt"/>
</dbReference>
<dbReference type="GO" id="GO:0019966">
    <property type="term" value="F:interleukin-1 binding"/>
    <property type="evidence" value="ECO:0007669"/>
    <property type="project" value="Ensembl"/>
</dbReference>
<dbReference type="GO" id="GO:0004908">
    <property type="term" value="F:interleukin-1 receptor activity"/>
    <property type="evidence" value="ECO:0000314"/>
    <property type="project" value="BHF-UCL"/>
</dbReference>
<dbReference type="GO" id="GO:0004909">
    <property type="term" value="F:interleukin-1, type I, activating receptor activity"/>
    <property type="evidence" value="ECO:0000304"/>
    <property type="project" value="ProtInc"/>
</dbReference>
<dbReference type="GO" id="GO:0061809">
    <property type="term" value="F:NAD+ nucleosidase activity, cyclic ADP-ribose generating"/>
    <property type="evidence" value="ECO:0007669"/>
    <property type="project" value="UniProtKB-EC"/>
</dbReference>
<dbReference type="GO" id="GO:0005161">
    <property type="term" value="F:platelet-derived growth factor receptor binding"/>
    <property type="evidence" value="ECO:0000353"/>
    <property type="project" value="BHF-UCL"/>
</dbReference>
<dbReference type="GO" id="GO:0002020">
    <property type="term" value="F:protease binding"/>
    <property type="evidence" value="ECO:0007669"/>
    <property type="project" value="Ensembl"/>
</dbReference>
<dbReference type="GO" id="GO:0004888">
    <property type="term" value="F:transmembrane signaling receptor activity"/>
    <property type="evidence" value="ECO:0000304"/>
    <property type="project" value="ProtInc"/>
</dbReference>
<dbReference type="GO" id="GO:0007166">
    <property type="term" value="P:cell surface receptor signaling pathway"/>
    <property type="evidence" value="ECO:0000304"/>
    <property type="project" value="ProtInc"/>
</dbReference>
<dbReference type="GO" id="GO:0006955">
    <property type="term" value="P:immune response"/>
    <property type="evidence" value="ECO:0000304"/>
    <property type="project" value="ProtInc"/>
</dbReference>
<dbReference type="GO" id="GO:0006954">
    <property type="term" value="P:inflammatory response"/>
    <property type="evidence" value="ECO:0007669"/>
    <property type="project" value="UniProtKB-KW"/>
</dbReference>
<dbReference type="GO" id="GO:0070498">
    <property type="term" value="P:interleukin-1-mediated signaling pathway"/>
    <property type="evidence" value="ECO:0000314"/>
    <property type="project" value="BHF-UCL"/>
</dbReference>
<dbReference type="GO" id="GO:0043123">
    <property type="term" value="P:positive regulation of canonical NF-kappaB signal transduction"/>
    <property type="evidence" value="ECO:0000315"/>
    <property type="project" value="BHF-UCL"/>
</dbReference>
<dbReference type="GO" id="GO:2000661">
    <property type="term" value="P:positive regulation of interleukin-1-mediated signaling pathway"/>
    <property type="evidence" value="ECO:0007669"/>
    <property type="project" value="Ensembl"/>
</dbReference>
<dbReference type="GO" id="GO:2000391">
    <property type="term" value="P:positive regulation of neutrophil extravasation"/>
    <property type="evidence" value="ECO:0007669"/>
    <property type="project" value="Ensembl"/>
</dbReference>
<dbReference type="GO" id="GO:0051897">
    <property type="term" value="P:positive regulation of phosphatidylinositol 3-kinase/protein kinase B signal transduction"/>
    <property type="evidence" value="ECO:0000314"/>
    <property type="project" value="BHF-UCL"/>
</dbReference>
<dbReference type="GO" id="GO:0010641">
    <property type="term" value="P:positive regulation of platelet-derived growth factor receptor signaling pathway"/>
    <property type="evidence" value="ECO:0000314"/>
    <property type="project" value="BHF-UCL"/>
</dbReference>
<dbReference type="GO" id="GO:2000556">
    <property type="term" value="P:positive regulation of T-helper 1 cell cytokine production"/>
    <property type="evidence" value="ECO:0000314"/>
    <property type="project" value="UniProtKB"/>
</dbReference>
<dbReference type="GO" id="GO:0032729">
    <property type="term" value="P:positive regulation of type II interferon production"/>
    <property type="evidence" value="ECO:0000314"/>
    <property type="project" value="UniProtKB"/>
</dbReference>
<dbReference type="GO" id="GO:0050727">
    <property type="term" value="P:regulation of inflammatory response"/>
    <property type="evidence" value="ECO:0000318"/>
    <property type="project" value="GO_Central"/>
</dbReference>
<dbReference type="GO" id="GO:0070555">
    <property type="term" value="P:response to interleukin-1"/>
    <property type="evidence" value="ECO:0000314"/>
    <property type="project" value="BHF-UCL"/>
</dbReference>
<dbReference type="GO" id="GO:0014805">
    <property type="term" value="P:smooth muscle adaptation"/>
    <property type="evidence" value="ECO:0000303"/>
    <property type="project" value="BHF-UCL"/>
</dbReference>
<dbReference type="CDD" id="cd20991">
    <property type="entry name" value="Ig1_IL1R_like"/>
    <property type="match status" value="1"/>
</dbReference>
<dbReference type="CDD" id="cd20994">
    <property type="entry name" value="Ig2_IL1R_like"/>
    <property type="match status" value="1"/>
</dbReference>
<dbReference type="CDD" id="cd20932">
    <property type="entry name" value="Ig3_IL1R_like"/>
    <property type="match status" value="1"/>
</dbReference>
<dbReference type="FunFam" id="3.40.50.10140:FF:000002">
    <property type="entry name" value="Interleukin 1 receptor accessory protein"/>
    <property type="match status" value="1"/>
</dbReference>
<dbReference type="FunFam" id="2.60.40.10:FF:001064">
    <property type="entry name" value="Interleukin 1 receptor, type I"/>
    <property type="match status" value="1"/>
</dbReference>
<dbReference type="FunFam" id="2.60.40.10:FF:000188">
    <property type="entry name" value="Interleukin-1 receptor accessory protein-like 1"/>
    <property type="match status" value="1"/>
</dbReference>
<dbReference type="FunFam" id="2.60.40.10:FF:000284">
    <property type="entry name" value="interleukin-1 receptor accessory protein-like 1"/>
    <property type="match status" value="1"/>
</dbReference>
<dbReference type="Gene3D" id="2.60.40.10">
    <property type="entry name" value="Immunoglobulins"/>
    <property type="match status" value="3"/>
</dbReference>
<dbReference type="Gene3D" id="3.40.50.10140">
    <property type="entry name" value="Toll/interleukin-1 receptor homology (TIR) domain"/>
    <property type="match status" value="1"/>
</dbReference>
<dbReference type="InterPro" id="IPR007110">
    <property type="entry name" value="Ig-like_dom"/>
</dbReference>
<dbReference type="InterPro" id="IPR036179">
    <property type="entry name" value="Ig-like_dom_sf"/>
</dbReference>
<dbReference type="InterPro" id="IPR013783">
    <property type="entry name" value="Ig-like_fold"/>
</dbReference>
<dbReference type="InterPro" id="IPR003599">
    <property type="entry name" value="Ig_sub"/>
</dbReference>
<dbReference type="InterPro" id="IPR015621">
    <property type="entry name" value="IL-1_rcpt_fam"/>
</dbReference>
<dbReference type="InterPro" id="IPR004076">
    <property type="entry name" value="IL-1_rcpt_I-typ"/>
</dbReference>
<dbReference type="InterPro" id="IPR004074">
    <property type="entry name" value="IL-1_rcpt_I/II-typ"/>
</dbReference>
<dbReference type="InterPro" id="IPR041416">
    <property type="entry name" value="IL-1RAcP-like_ig"/>
</dbReference>
<dbReference type="InterPro" id="IPR000157">
    <property type="entry name" value="TIR_dom"/>
</dbReference>
<dbReference type="InterPro" id="IPR035897">
    <property type="entry name" value="Toll_tir_struct_dom_sf"/>
</dbReference>
<dbReference type="PANTHER" id="PTHR11890">
    <property type="entry name" value="INTERLEUKIN-1 RECEPTOR FAMILY MEMBER"/>
    <property type="match status" value="1"/>
</dbReference>
<dbReference type="PANTHER" id="PTHR11890:SF26">
    <property type="entry name" value="INTERLEUKIN-1 RECEPTOR TYPE 1"/>
    <property type="match status" value="1"/>
</dbReference>
<dbReference type="Pfam" id="PF13895">
    <property type="entry name" value="Ig_2"/>
    <property type="match status" value="1"/>
</dbReference>
<dbReference type="Pfam" id="PF18452">
    <property type="entry name" value="Ig_6"/>
    <property type="match status" value="1"/>
</dbReference>
<dbReference type="Pfam" id="PF01582">
    <property type="entry name" value="TIR"/>
    <property type="match status" value="1"/>
</dbReference>
<dbReference type="PRINTS" id="PR01538">
    <property type="entry name" value="INTRLEUKN1R1"/>
</dbReference>
<dbReference type="PRINTS" id="PR01536">
    <property type="entry name" value="INTRLKN1R12F"/>
</dbReference>
<dbReference type="PRINTS" id="PR01537">
    <property type="entry name" value="INTRLKN1R1F"/>
</dbReference>
<dbReference type="SMART" id="SM00409">
    <property type="entry name" value="IG"/>
    <property type="match status" value="3"/>
</dbReference>
<dbReference type="SMART" id="SM00255">
    <property type="entry name" value="TIR"/>
    <property type="match status" value="1"/>
</dbReference>
<dbReference type="SUPFAM" id="SSF48726">
    <property type="entry name" value="Immunoglobulin"/>
    <property type="match status" value="3"/>
</dbReference>
<dbReference type="SUPFAM" id="SSF52200">
    <property type="entry name" value="Toll/Interleukin receptor TIR domain"/>
    <property type="match status" value="1"/>
</dbReference>
<dbReference type="PROSITE" id="PS50835">
    <property type="entry name" value="IG_LIKE"/>
    <property type="match status" value="3"/>
</dbReference>
<dbReference type="PROSITE" id="PS50104">
    <property type="entry name" value="TIR"/>
    <property type="match status" value="1"/>
</dbReference>
<organism>
    <name type="scientific">Homo sapiens</name>
    <name type="common">Human</name>
    <dbReference type="NCBI Taxonomy" id="9606"/>
    <lineage>
        <taxon>Eukaryota</taxon>
        <taxon>Metazoa</taxon>
        <taxon>Chordata</taxon>
        <taxon>Craniata</taxon>
        <taxon>Vertebrata</taxon>
        <taxon>Euteleostomi</taxon>
        <taxon>Mammalia</taxon>
        <taxon>Eutheria</taxon>
        <taxon>Euarchontoglires</taxon>
        <taxon>Primates</taxon>
        <taxon>Haplorrhini</taxon>
        <taxon>Catarrhini</taxon>
        <taxon>Hominidae</taxon>
        <taxon>Homo</taxon>
    </lineage>
</organism>
<feature type="signal peptide">
    <location>
        <begin position="1"/>
        <end position="17"/>
    </location>
</feature>
<feature type="chain" id="PRO_0000015435" description="Interleukin-1 receptor type 1, membrane form">
    <location>
        <begin position="18"/>
        <end position="569"/>
    </location>
</feature>
<feature type="chain" id="PRO_0000415344" description="Interleukin-1 receptor type 1, soluble form">
    <location>
        <begin position="18"/>
        <end status="unknown"/>
    </location>
</feature>
<feature type="topological domain" description="Extracellular" evidence="1">
    <location>
        <begin position="18"/>
        <end position="336"/>
    </location>
</feature>
<feature type="transmembrane region" description="Helical" evidence="1">
    <location>
        <begin position="337"/>
        <end position="356"/>
    </location>
</feature>
<feature type="topological domain" description="Cytoplasmic" evidence="1">
    <location>
        <begin position="357"/>
        <end position="569"/>
    </location>
</feature>
<feature type="domain" description="Ig-like C2-type 1">
    <location>
        <begin position="23"/>
        <end position="110"/>
    </location>
</feature>
<feature type="domain" description="Ig-like C2-type 2">
    <location>
        <begin position="118"/>
        <end position="210"/>
    </location>
</feature>
<feature type="domain" description="Ig-like C2-type 3">
    <location>
        <begin position="226"/>
        <end position="328"/>
    </location>
</feature>
<feature type="domain" description="TIR" evidence="2">
    <location>
        <begin position="383"/>
        <end position="538"/>
    </location>
</feature>
<feature type="region of interest" description="Disordered" evidence="3">
    <location>
        <begin position="540"/>
        <end position="569"/>
    </location>
</feature>
<feature type="compositionally biased region" description="Basic and acidic residues" evidence="3">
    <location>
        <begin position="556"/>
        <end position="569"/>
    </location>
</feature>
<feature type="active site" evidence="2">
    <location>
        <position position="470"/>
    </location>
</feature>
<feature type="modified residue" description="Phosphotyrosine" evidence="13">
    <location>
        <position position="496"/>
    </location>
</feature>
<feature type="glycosylation site" description="N-linked (GlcNAc...) asparagine" evidence="1">
    <location>
        <position position="100"/>
    </location>
</feature>
<feature type="glycosylation site" description="N-linked (GlcNAc...) asparagine" evidence="1">
    <location>
        <position position="193"/>
    </location>
</feature>
<feature type="glycosylation site" description="N-linked (GlcNAc...) asparagine" evidence="1">
    <location>
        <position position="233"/>
    </location>
</feature>
<feature type="glycosylation site" description="N-linked (GlcNAc...) asparagine" evidence="1">
    <location>
        <position position="249"/>
    </location>
</feature>
<feature type="glycosylation site" description="N-linked (GlcNAc...) asparagine" evidence="1">
    <location>
        <position position="263"/>
    </location>
</feature>
<feature type="glycosylation site" description="N-linked (GlcNAc...) asparagine" evidence="1">
    <location>
        <position position="297"/>
    </location>
</feature>
<feature type="disulfide bond">
    <location>
        <begin position="23"/>
        <end position="104"/>
    </location>
</feature>
<feature type="disulfide bond">
    <location>
        <begin position="44"/>
        <end position="96"/>
    </location>
</feature>
<feature type="disulfide bond">
    <location>
        <begin position="121"/>
        <end position="164"/>
    </location>
</feature>
<feature type="disulfide bond">
    <location>
        <begin position="142"/>
        <end position="196"/>
    </location>
</feature>
<feature type="disulfide bond">
    <location>
        <begin position="248"/>
        <end position="312"/>
    </location>
</feature>
<feature type="sequence variant" id="VAR_019131" description="In dbSNP:rs2228139." evidence="14">
    <original>A</original>
    <variation>G</variation>
    <location>
        <position position="124"/>
    </location>
</feature>
<feature type="sequence variant" id="VAR_088970" description="In CRMO3; likely pathogenic; results in increased function in positive regulation of interleukin-1-mediated signaling pathway due to lack of inhibition by IL1RN; severely decreased interaction with IL1RN; no effect on interaction with IL1A and IL1B." evidence="8">
    <original>K</original>
    <variation>E</variation>
    <location>
        <position position="131"/>
    </location>
</feature>
<feature type="sequence variant" id="VAR_029189" description="In dbSNP:rs28362304.">
    <original>T</original>
    <variation>M</variation>
    <location>
        <position position="344"/>
    </location>
</feature>
<feature type="mutagenesis site" description="Severely decreased interaction with IL1RN." evidence="8">
    <original>K</original>
    <variation>D</variation>
    <location>
        <position position="131"/>
    </location>
</feature>
<feature type="mutagenesis site" description="No effect on interaction with IL1RN." evidence="8">
    <original>K</original>
    <variation>H</variation>
    <location>
        <position position="131"/>
    </location>
</feature>
<feature type="mutagenesis site" description="No effect on interaction with IL1RN." evidence="8">
    <original>K</original>
    <variation>R</variation>
    <location>
        <position position="131"/>
    </location>
</feature>
<feature type="mutagenesis site" description="Reduces NF-kappa-B activation." evidence="5">
    <original>D</original>
    <variation>A</variation>
    <location>
        <position position="369"/>
    </location>
</feature>
<feature type="mutagenesis site" description="Reduces NF-kappa-B activation and receptor-associated kinase activation." evidence="5">
    <original>R</original>
    <variation>A</variation>
    <location>
        <position position="428"/>
    </location>
</feature>
<feature type="strand" evidence="20">
    <location>
        <begin position="24"/>
        <end position="27"/>
    </location>
</feature>
<feature type="strand" evidence="20">
    <location>
        <begin position="32"/>
        <end position="35"/>
    </location>
</feature>
<feature type="strand" evidence="20">
    <location>
        <begin position="40"/>
        <end position="43"/>
    </location>
</feature>
<feature type="helix" evidence="18">
    <location>
        <begin position="48"/>
        <end position="50"/>
    </location>
</feature>
<feature type="strand" evidence="20">
    <location>
        <begin position="56"/>
        <end position="59"/>
    </location>
</feature>
<feature type="strand" evidence="20">
    <location>
        <begin position="72"/>
        <end position="77"/>
    </location>
</feature>
<feature type="strand" evidence="20">
    <location>
        <begin position="80"/>
        <end position="83"/>
    </location>
</feature>
<feature type="helix" evidence="20">
    <location>
        <begin position="88"/>
        <end position="90"/>
    </location>
</feature>
<feature type="strand" evidence="20">
    <location>
        <begin position="92"/>
        <end position="97"/>
    </location>
</feature>
<feature type="strand" evidence="19">
    <location>
        <begin position="100"/>
        <end position="102"/>
    </location>
</feature>
<feature type="strand" evidence="20">
    <location>
        <begin position="105"/>
        <end position="114"/>
    </location>
</feature>
<feature type="strand" evidence="20">
    <location>
        <begin position="120"/>
        <end position="122"/>
    </location>
</feature>
<feature type="helix" evidence="20">
    <location>
        <begin position="124"/>
        <end position="126"/>
    </location>
</feature>
<feature type="strand" evidence="20">
    <location>
        <begin position="127"/>
        <end position="133"/>
    </location>
</feature>
<feature type="strand" evidence="17">
    <location>
        <begin position="135"/>
        <end position="137"/>
    </location>
</feature>
<feature type="strand" evidence="20">
    <location>
        <begin position="138"/>
        <end position="141"/>
    </location>
</feature>
<feature type="helix" evidence="20">
    <location>
        <begin position="146"/>
        <end position="148"/>
    </location>
</feature>
<feature type="turn" evidence="20">
    <location>
        <begin position="151"/>
        <end position="153"/>
    </location>
</feature>
<feature type="strand" evidence="20">
    <location>
        <begin position="159"/>
        <end position="162"/>
    </location>
</feature>
<feature type="strand" evidence="20">
    <location>
        <begin position="171"/>
        <end position="177"/>
    </location>
</feature>
<feature type="strand" evidence="20">
    <location>
        <begin position="180"/>
        <end position="183"/>
    </location>
</feature>
<feature type="helix" evidence="20">
    <location>
        <begin position="188"/>
        <end position="190"/>
    </location>
</feature>
<feature type="strand" evidence="20">
    <location>
        <begin position="192"/>
        <end position="202"/>
    </location>
</feature>
<feature type="strand" evidence="20">
    <location>
        <begin position="205"/>
        <end position="218"/>
    </location>
</feature>
<feature type="strand" evidence="20">
    <location>
        <begin position="227"/>
        <end position="230"/>
    </location>
</feature>
<feature type="strand" evidence="20">
    <location>
        <begin position="233"/>
        <end position="237"/>
    </location>
</feature>
<feature type="strand" evidence="19">
    <location>
        <begin position="240"/>
        <end position="242"/>
    </location>
</feature>
<feature type="strand" evidence="20">
    <location>
        <begin position="244"/>
        <end position="252"/>
    </location>
</feature>
<feature type="strand" evidence="20">
    <location>
        <begin position="256"/>
        <end position="262"/>
    </location>
</feature>
<feature type="strand" evidence="20">
    <location>
        <begin position="272"/>
        <end position="281"/>
    </location>
</feature>
<feature type="helix" evidence="20">
    <location>
        <begin position="287"/>
        <end position="289"/>
    </location>
</feature>
<feature type="strand" evidence="20">
    <location>
        <begin position="290"/>
        <end position="300"/>
    </location>
</feature>
<feature type="helix" evidence="20">
    <location>
        <begin position="303"/>
        <end position="306"/>
    </location>
</feature>
<feature type="strand" evidence="20">
    <location>
        <begin position="310"/>
        <end position="316"/>
    </location>
</feature>
<feature type="strand" evidence="20">
    <location>
        <begin position="319"/>
        <end position="328"/>
    </location>
</feature>
<proteinExistence type="evidence at protein level"/>
<comment type="function">
    <text evidence="4 5 7 8">Receptor for IL1A, IL1B and IL1RN (PubMed:2950091, PubMed:37315560). After binding to interleukin-1 associates with the coreceptor IL1RAP to form the high affinity interleukin-1 receptor complex which mediates interleukin-1-dependent activation of NF-kappa-B, MAPK and other pathways. Signaling involves the recruitment of adapter molecules such as TOLLIP, MYD88, and IRAK1 or IRAK2 via the respective TIR domains of the receptor/coreceptor subunits. Binds ligands with comparable affinity and binding of antagonist IL1RN prevents association with IL1RAP to form a signaling complex. Involved in IL1B-mediated costimulation of IFNG production from T-helper 1 (Th1) cells (PubMed:10653850).</text>
</comment>
<comment type="catalytic activity">
    <reaction evidence="2">
        <text>NAD(+) + H2O = ADP-D-ribose + nicotinamide + H(+)</text>
        <dbReference type="Rhea" id="RHEA:16301"/>
        <dbReference type="ChEBI" id="CHEBI:15377"/>
        <dbReference type="ChEBI" id="CHEBI:15378"/>
        <dbReference type="ChEBI" id="CHEBI:17154"/>
        <dbReference type="ChEBI" id="CHEBI:57540"/>
        <dbReference type="ChEBI" id="CHEBI:57967"/>
        <dbReference type="EC" id="3.2.2.6"/>
    </reaction>
    <physiologicalReaction direction="left-to-right" evidence="2">
        <dbReference type="Rhea" id="RHEA:16302"/>
    </physiologicalReaction>
</comment>
<comment type="subunit">
    <text evidence="6 7 10 11 12 13">The interleukin-1 receptor complex is a heterodimer of IL1R1 and IL1RAP. Interacts with PIK3R1. Interacts with IL1A (PubMed:2950091).</text>
</comment>
<comment type="interaction">
    <interactant intactId="EBI-525905">
        <id>P14778</id>
    </interactant>
    <interactant intactId="EBI-1026330">
        <id>P18510</id>
        <label>IL1RN</label>
    </interactant>
    <organismsDiffer>false</organismsDiffer>
    <experiments>2</experiments>
</comment>
<comment type="interaction">
    <interactant intactId="EBI-525905">
        <id>P14778</id>
    </interactant>
    <interactant intactId="EBI-641237">
        <id>P09619</id>
        <label>PDGFRB</label>
    </interactant>
    <organismsDiffer>false</organismsDiffer>
    <experiments>2</experiments>
</comment>
<comment type="interaction">
    <interactant intactId="EBI-525905">
        <id>P14778</id>
    </interactant>
    <interactant intactId="EBI-359276">
        <id>Q9Y4K3</id>
        <label>TRAF6</label>
    </interactant>
    <organismsDiffer>false</organismsDiffer>
    <experiments>2</experiments>
</comment>
<comment type="subcellular location">
    <subcellularLocation>
        <location evidence="9">Membrane</location>
        <topology evidence="9">Single-pass type I membrane protein</topology>
    </subcellularLocation>
    <subcellularLocation>
        <location evidence="16">Cell membrane</location>
    </subcellularLocation>
    <subcellularLocation>
        <location evidence="9">Secreted</location>
    </subcellularLocation>
</comment>
<comment type="tissue specificity">
    <text evidence="4">Expressed in T-helper cell subsets. Preferentially expressed in T-helper 1 (Th1) cells.</text>
</comment>
<comment type="domain">
    <text evidence="2">The TIR domain mediates NAD(+) hydrolase (NADase) activity. Self-association of TIR domains is required for NADase activity.</text>
</comment>
<comment type="PTM">
    <text evidence="9">A soluble form (sIL1R1) is probably produced by proteolytic cleavage at the cell surface (shedding).</text>
</comment>
<comment type="PTM">
    <text evidence="13">Rapidly phosphorylated on Tyr-496 in response to IL-1, which creates a SH2 binding site for the PI 3-kinase regulatory subunit PIK3R1.</text>
</comment>
<comment type="disease" evidence="8">
    <disease id="DI-06753">
        <name>Chronic recurrent multifocal osteomyelitis 3</name>
        <acronym>CRMO3</acronym>
        <description>An autosomal dominant autoinflammatory bone disease characterized by early-childhood onset of bone pain and arthritis caused by sterile osteomyelitis.</description>
        <dbReference type="MIM" id="259680"/>
    </disease>
    <text>The disease may be caused by variants affecting the gene represented in this entry.</text>
</comment>
<comment type="similarity">
    <text evidence="15">Belongs to the interleukin-1 receptor family.</text>
</comment>
<reference key="1">
    <citation type="journal article" date="1989" name="Nucleic Acids Res.">
        <title>Sequence of the cDNA for the human fibroblast type interleukin-1 receptor.</title>
        <authorList>
            <person name="Chua A.O."/>
            <person name="Gubler U."/>
        </authorList>
    </citation>
    <scope>NUCLEOTIDE SEQUENCE [MRNA]</scope>
    <source>
        <tissue>Liver</tissue>
    </source>
</reference>
<reference key="2">
    <citation type="journal article" date="1989" name="Proc. Natl. Acad. Sci. U.S.A.">
        <title>Cloning the interleukin 1 receptor from human T cells.</title>
        <authorList>
            <person name="Sims J.E."/>
            <person name="Acres R.B."/>
            <person name="Grubin C.E."/>
            <person name="McMahan C.J."/>
            <person name="Wignall J.M."/>
            <person name="March C.J."/>
            <person name="Dower S.K."/>
        </authorList>
    </citation>
    <scope>NUCLEOTIDE SEQUENCE [MRNA]</scope>
    <source>
        <tissue>T-cell</tissue>
    </source>
</reference>
<reference key="3">
    <citation type="submission" date="2002-07" db="EMBL/GenBank/DDBJ databases">
        <authorList>
            <consortium name="SeattleSNPs variation discovery resource"/>
        </authorList>
    </citation>
    <scope>NUCLEOTIDE SEQUENCE [GENOMIC DNA]</scope>
    <scope>VARIANT GLY-124</scope>
</reference>
<reference key="4">
    <citation type="journal article" date="2005" name="Nature">
        <title>Generation and annotation of the DNA sequences of human chromosomes 2 and 4.</title>
        <authorList>
            <person name="Hillier L.W."/>
            <person name="Graves T.A."/>
            <person name="Fulton R.S."/>
            <person name="Fulton L.A."/>
            <person name="Pepin K.H."/>
            <person name="Minx P."/>
            <person name="Wagner-McPherson C."/>
            <person name="Layman D."/>
            <person name="Wylie K."/>
            <person name="Sekhon M."/>
            <person name="Becker M.C."/>
            <person name="Fewell G.A."/>
            <person name="Delehaunty K.D."/>
            <person name="Miner T.L."/>
            <person name="Nash W.E."/>
            <person name="Kremitzki C."/>
            <person name="Oddy L."/>
            <person name="Du H."/>
            <person name="Sun H."/>
            <person name="Bradshaw-Cordum H."/>
            <person name="Ali J."/>
            <person name="Carter J."/>
            <person name="Cordes M."/>
            <person name="Harris A."/>
            <person name="Isak A."/>
            <person name="van Brunt A."/>
            <person name="Nguyen C."/>
            <person name="Du F."/>
            <person name="Courtney L."/>
            <person name="Kalicki J."/>
            <person name="Ozersky P."/>
            <person name="Abbott S."/>
            <person name="Armstrong J."/>
            <person name="Belter E.A."/>
            <person name="Caruso L."/>
            <person name="Cedroni M."/>
            <person name="Cotton M."/>
            <person name="Davidson T."/>
            <person name="Desai A."/>
            <person name="Elliott G."/>
            <person name="Erb T."/>
            <person name="Fronick C."/>
            <person name="Gaige T."/>
            <person name="Haakenson W."/>
            <person name="Haglund K."/>
            <person name="Holmes A."/>
            <person name="Harkins R."/>
            <person name="Kim K."/>
            <person name="Kruchowski S.S."/>
            <person name="Strong C.M."/>
            <person name="Grewal N."/>
            <person name="Goyea E."/>
            <person name="Hou S."/>
            <person name="Levy A."/>
            <person name="Martinka S."/>
            <person name="Mead K."/>
            <person name="McLellan M.D."/>
            <person name="Meyer R."/>
            <person name="Randall-Maher J."/>
            <person name="Tomlinson C."/>
            <person name="Dauphin-Kohlberg S."/>
            <person name="Kozlowicz-Reilly A."/>
            <person name="Shah N."/>
            <person name="Swearengen-Shahid S."/>
            <person name="Snider J."/>
            <person name="Strong J.T."/>
            <person name="Thompson J."/>
            <person name="Yoakum M."/>
            <person name="Leonard S."/>
            <person name="Pearman C."/>
            <person name="Trani L."/>
            <person name="Radionenko M."/>
            <person name="Waligorski J.E."/>
            <person name="Wang C."/>
            <person name="Rock S.M."/>
            <person name="Tin-Wollam A.-M."/>
            <person name="Maupin R."/>
            <person name="Latreille P."/>
            <person name="Wendl M.C."/>
            <person name="Yang S.-P."/>
            <person name="Pohl C."/>
            <person name="Wallis J.W."/>
            <person name="Spieth J."/>
            <person name="Bieri T.A."/>
            <person name="Berkowicz N."/>
            <person name="Nelson J.O."/>
            <person name="Osborne J."/>
            <person name="Ding L."/>
            <person name="Meyer R."/>
            <person name="Sabo A."/>
            <person name="Shotland Y."/>
            <person name="Sinha P."/>
            <person name="Wohldmann P.E."/>
            <person name="Cook L.L."/>
            <person name="Hickenbotham M.T."/>
            <person name="Eldred J."/>
            <person name="Williams D."/>
            <person name="Jones T.A."/>
            <person name="She X."/>
            <person name="Ciccarelli F.D."/>
            <person name="Izaurralde E."/>
            <person name="Taylor J."/>
            <person name="Schmutz J."/>
            <person name="Myers R.M."/>
            <person name="Cox D.R."/>
            <person name="Huang X."/>
            <person name="McPherson J.D."/>
            <person name="Mardis E.R."/>
            <person name="Clifton S.W."/>
            <person name="Warren W.C."/>
            <person name="Chinwalla A.T."/>
            <person name="Eddy S.R."/>
            <person name="Marra M.A."/>
            <person name="Ovcharenko I."/>
            <person name="Furey T.S."/>
            <person name="Miller W."/>
            <person name="Eichler E.E."/>
            <person name="Bork P."/>
            <person name="Suyama M."/>
            <person name="Torrents D."/>
            <person name="Waterston R.H."/>
            <person name="Wilson R.K."/>
        </authorList>
    </citation>
    <scope>NUCLEOTIDE SEQUENCE [LARGE SCALE GENOMIC DNA]</scope>
</reference>
<reference key="5">
    <citation type="submission" date="2005-09" db="EMBL/GenBank/DDBJ databases">
        <authorList>
            <person name="Mural R.J."/>
            <person name="Istrail S."/>
            <person name="Sutton G.G."/>
            <person name="Florea L."/>
            <person name="Halpern A.L."/>
            <person name="Mobarry C.M."/>
            <person name="Lippert R."/>
            <person name="Walenz B."/>
            <person name="Shatkay H."/>
            <person name="Dew I."/>
            <person name="Miller J.R."/>
            <person name="Flanigan M.J."/>
            <person name="Edwards N.J."/>
            <person name="Bolanos R."/>
            <person name="Fasulo D."/>
            <person name="Halldorsson B.V."/>
            <person name="Hannenhalli S."/>
            <person name="Turner R."/>
            <person name="Yooseph S."/>
            <person name="Lu F."/>
            <person name="Nusskern D.R."/>
            <person name="Shue B.C."/>
            <person name="Zheng X.H."/>
            <person name="Zhong F."/>
            <person name="Delcher A.L."/>
            <person name="Huson D.H."/>
            <person name="Kravitz S.A."/>
            <person name="Mouchard L."/>
            <person name="Reinert K."/>
            <person name="Remington K.A."/>
            <person name="Clark A.G."/>
            <person name="Waterman M.S."/>
            <person name="Eichler E.E."/>
            <person name="Adams M.D."/>
            <person name="Hunkapiller M.W."/>
            <person name="Myers E.W."/>
            <person name="Venter J.C."/>
        </authorList>
    </citation>
    <scope>NUCLEOTIDE SEQUENCE [LARGE SCALE GENOMIC DNA]</scope>
</reference>
<reference key="6">
    <citation type="journal article" date="2004" name="Genome Res.">
        <title>The status, quality, and expansion of the NIH full-length cDNA project: the Mammalian Gene Collection (MGC).</title>
        <authorList>
            <consortium name="The MGC Project Team"/>
        </authorList>
    </citation>
    <scope>NUCLEOTIDE SEQUENCE [LARGE SCALE MRNA]</scope>
    <source>
        <tissue>Brain</tissue>
    </source>
</reference>
<reference key="7">
    <citation type="journal article" date="1987" name="J. Biol. Chem.">
        <title>The interleukin-1 receptor binds the human interleukin-1 alpha precursor but not the interleukin-1 beta precursor.</title>
        <authorList>
            <person name="Mosley B."/>
            <person name="Urdal D.L."/>
            <person name="Prickett K.S."/>
            <person name="Larsen A."/>
            <person name="Cosman D."/>
            <person name="Conlon P.J."/>
            <person name="Gillis S."/>
            <person name="Dower S.K."/>
        </authorList>
    </citation>
    <scope>FUNCTION</scope>
    <scope>INTERACTION WITH IL1A</scope>
</reference>
<reference key="8">
    <citation type="journal article" date="1993" name="Cytokine">
        <title>Specific binding of interleukin 1 (IL-1) beta and IL-1 receptor antagonist (IL-1ra) to human serum. High-affinity binding of IL-1ra to soluble IL-1 receptor type I.</title>
        <authorList>
            <person name="Svenson M."/>
            <person name="Hansen M.B."/>
            <person name="Heegaard P."/>
            <person name="Abell K."/>
            <person name="Bendtzen K."/>
        </authorList>
    </citation>
    <scope>SUBCELLULAR LOCATION</scope>
    <scope>PROTEOLYTIC PROCESSING</scope>
</reference>
<reference key="9">
    <citation type="journal article" date="1994" name="J. Immunol.">
        <title>Elevated levels of shed type II IL-1 receptor in sepsis. Potential role for type II receptor in regulation of IL-1 responses.</title>
        <authorList>
            <person name="Giri J.G."/>
            <person name="Wells J."/>
            <person name="Dower S.K."/>
            <person name="McCall C.E."/>
            <person name="Guzman R.N."/>
            <person name="Slack J."/>
            <person name="Bird T.A."/>
            <person name="Shanebeck K."/>
            <person name="Grabstein K.H."/>
            <person name="Sims J.E."/>
            <person name="Alderson M.R."/>
        </authorList>
    </citation>
    <scope>LIGAND-BINDING</scope>
</reference>
<reference key="10">
    <citation type="journal article" date="1997" name="Proc. Natl. Acad. Sci. U.S.A.">
        <title>Recruitment of IRAK to the interleukin 1 receptor complex requires interleukin 1 receptor accessory protein.</title>
        <authorList>
            <person name="Huang J."/>
            <person name="Gao X."/>
            <person name="Li S."/>
            <person name="Cao Z."/>
        </authorList>
    </citation>
    <scope>INTERACTION WITH IL1RAP AND IRAK1</scope>
    <source>
        <tissue>Placenta</tissue>
    </source>
</reference>
<reference key="11">
    <citation type="journal article" date="1998" name="FEBS Lett.">
        <title>Phosphatidylinositol 3-kinase is recruited to a specific site in the activated IL-1 receptor I.</title>
        <authorList>
            <person name="Marmiroli S."/>
            <person name="Bavelloni A."/>
            <person name="Faenza I."/>
            <person name="Sirri A."/>
            <person name="Ognibene A."/>
            <person name="Cenni V."/>
            <person name="Tsukada J."/>
            <person name="Koyama Y."/>
            <person name="Ruzzene M."/>
            <person name="Ferri A."/>
            <person name="Auron P.E."/>
            <person name="Toker A."/>
            <person name="Maraldi N.M."/>
        </authorList>
    </citation>
    <scope>PHOSPHORYLATION AT TYR-496</scope>
    <scope>INTERACTION WITH PIK3R1</scope>
</reference>
<reference key="12">
    <citation type="journal article" date="2000" name="Int. Immunol.">
        <title>IL-12 synergizes with IL-18 or IL-1beta for IFN-gamma production from human T cells.</title>
        <authorList>
            <person name="Tominaga K."/>
            <person name="Yoshimoto T."/>
            <person name="Torigoe K."/>
            <person name="Kurimoto M."/>
            <person name="Matsui K."/>
            <person name="Hada T."/>
            <person name="Okamura H."/>
            <person name="Nakanishi K."/>
        </authorList>
    </citation>
    <scope>FUNCTION</scope>
    <scope>TISSUE SPECIFICITY</scope>
</reference>
<reference key="13">
    <citation type="journal article" date="2000" name="J. Biol. Chem.">
        <title>Identification of two major sites in the type I interleukin-1 receptor cytoplasmic region responsible for coupling to pro-inflammatory signaling pathways.</title>
        <authorList>
            <person name="Slack J.L."/>
            <person name="Schooley K."/>
            <person name="Bonnert T.P."/>
            <person name="Mitcham J.L."/>
            <person name="Qwarnstrom E.E."/>
            <person name="Sims J.E."/>
            <person name="Dower S.K."/>
        </authorList>
    </citation>
    <scope>FUNCTION</scope>
    <scope>MUTAGENESIS OF ASP-369 AND ARG-428</scope>
</reference>
<reference key="14">
    <citation type="journal article" date="1997" name="Nature">
        <title>Crystal structure of the type-I interleukin-1 receptor complexed with interleukin-1beta.</title>
        <authorList>
            <person name="Vigers G.P.A."/>
            <person name="Anderson L.J."/>
            <person name="Caffes P."/>
            <person name="Brandhuber B.J."/>
        </authorList>
    </citation>
    <scope>X-RAY CRYSTALLOGRAPHY (2.5 ANGSTROMS) OF 23-332 IN COMPLEX WITH IL1B</scope>
</reference>
<reference key="15">
    <citation type="journal article" date="1997" name="Nature">
        <title>A new cytokine-receptor binding mode revealed by the crystal structure of the IL-1 receptor with an antagonist.</title>
        <authorList>
            <person name="Schreuder H."/>
            <person name="Tardif C."/>
            <person name="Trump-Kallmeyer S."/>
            <person name="Soffientini A."/>
            <person name="Sarubbi E."/>
            <person name="Akeson A."/>
            <person name="Bowlin T."/>
            <person name="Yanofsky S."/>
            <person name="Barrett R.W."/>
        </authorList>
    </citation>
    <scope>X-RAY CRYSTALLOGRAPHY (2.7 ANGSTROMS) OF 21-331 IN COMPLEX WITH IL1RA</scope>
</reference>
<reference key="16">
    <citation type="journal article" date="2000" name="J. Biol. Chem.">
        <title>X-ray crystal structure of a small antagonist peptide bound to interleukin-1 receptor type 1.</title>
        <authorList>
            <person name="Vigers G.P.A."/>
            <person name="Dripps D.J."/>
            <person name="Edwards C.K. III"/>
            <person name="Brandhuber B.J."/>
        </authorList>
    </citation>
    <scope>X-RAY CRYSTALLOGRAPHY (3.0 ANGSTROMS) OF 4-315 IN COMPLEX WITH THE ANTAGONIST PEPTIDE AF10847</scope>
</reference>
<reference key="17">
    <citation type="journal article" date="2023" name="Immunity">
        <title>Identification of an IL-1 receptor mutation driving autoinflammation directs IL-1-targeted drug design.</title>
        <authorList>
            <person name="Wang Y."/>
            <person name="Wang J."/>
            <person name="Zheng W."/>
            <person name="Zhang J."/>
            <person name="Wang J."/>
            <person name="Jin T."/>
            <person name="Tao P."/>
            <person name="Wang Y."/>
            <person name="Liu C."/>
            <person name="Huang J."/>
            <person name="Lee P.Y."/>
            <person name="Yu X."/>
            <person name="Zhou Q."/>
        </authorList>
    </citation>
    <scope>VARIANT CRMO3 GLU-131</scope>
    <scope>CHARACTERIZATION OF VARIANT CRMO3 GLU-131</scope>
    <scope>INVOLVEMENT IN CRMO3</scope>
    <scope>FUNCTION</scope>
    <scope>MUTAGENESIS OF LYS-131</scope>
</reference>
<accession>P14778</accession>
<accession>Q587I7</accession>
<protein>
    <recommendedName>
        <fullName>Interleukin-1 receptor type 1</fullName>
        <shortName>IL-1R-1</shortName>
        <shortName>IL-1RT-1</shortName>
        <shortName>IL-1RT1</shortName>
        <ecNumber evidence="2">3.2.2.6</ecNumber>
    </recommendedName>
    <alternativeName>
        <fullName>CD121 antigen-like family member A</fullName>
    </alternativeName>
    <alternativeName>
        <fullName>Interleukin-1 receptor alpha</fullName>
        <shortName>IL-1R-alpha</shortName>
    </alternativeName>
    <alternativeName>
        <fullName>Interleukin-1 receptor type I</fullName>
    </alternativeName>
    <alternativeName>
        <fullName>p80</fullName>
    </alternativeName>
    <cdAntigenName>CD121a</cdAntigenName>
    <component>
        <recommendedName>
            <fullName>Interleukin-1 receptor type 1, membrane form</fullName>
            <shortName>mIL-1R1</shortName>
            <shortName>mIL-1RI</shortName>
        </recommendedName>
    </component>
    <component>
        <recommendedName>
            <fullName>Interleukin-1 receptor type 1, soluble form</fullName>
            <shortName>sIL-1R1</shortName>
            <shortName>sIL-1RI</shortName>
        </recommendedName>
    </component>
</protein>
<name>IL1R1_HUMAN</name>
<gene>
    <name type="primary">IL1R1</name>
    <name type="synonym">IL1R</name>
    <name type="synonym">IL1RA</name>
    <name type="synonym">IL1RT1</name>
</gene>
<sequence length="569" mass="65402">MKVLLRLICFIALLISSLEADKCKEREEKIILVSSANEIDVRPCPLNPNEHKGTITWYKDDSKTPVSTEQASRIHQHKEKLWFVPAKVEDSGHYYCVVRNSSYCLRIKISAKFVENEPNLCYNAQAIFKQKLPVAGDGGLVCPYMEFFKNENNELPKLQWYKDCKPLLLDNIHFSGVKDRLIVMNVAEKHRGNYTCHASYTYLGKQYPITRVIEFITLEENKPTRPVIVSPANETMEVDLGSQIQLICNVTGQLSDIAYWKWNGSVIDEDDPVLGEDYYSVENPANKRRSTLITVLNISEIESRFYKHPFTCFAKNTHGIDAAYIQLIYPVTNFQKHMIGICVTLTVIIVCSVFIYKIFKIDIVLWYRDSCYDFLPIKASDGKTYDAYILYPKTVGEGSTSDCDIFVFKVLPEVLEKQCGYKLFIYGRDDYVGEDIVEVINENVKKSRRLIIILVRETSGFSWLGGSSEEQIAMYNALVQDGIKVVLLELEKIQDYEKMPESIKFIKQKHGAIRWSGDFTQGPQSAKTRFWKNVRYHMPVQRRSPSSKHQLLSPATKEKLQREAHVPLG</sequence>
<keyword id="KW-0002">3D-structure</keyword>
<keyword id="KW-1003">Cell membrane</keyword>
<keyword id="KW-0225">Disease variant</keyword>
<keyword id="KW-1015">Disulfide bond</keyword>
<keyword id="KW-0325">Glycoprotein</keyword>
<keyword id="KW-0378">Hydrolase</keyword>
<keyword id="KW-0393">Immunoglobulin domain</keyword>
<keyword id="KW-0395">Inflammatory response</keyword>
<keyword id="KW-0472">Membrane</keyword>
<keyword id="KW-0520">NAD</keyword>
<keyword id="KW-0597">Phosphoprotein</keyword>
<keyword id="KW-1267">Proteomics identification</keyword>
<keyword id="KW-0675">Receptor</keyword>
<keyword id="KW-1185">Reference proteome</keyword>
<keyword id="KW-0677">Repeat</keyword>
<keyword id="KW-0964">Secreted</keyword>
<keyword id="KW-0732">Signal</keyword>
<keyword id="KW-0812">Transmembrane</keyword>
<keyword id="KW-1133">Transmembrane helix</keyword>